<feature type="chain" id="PRO_0000333483" description="Type 1 phosphatases regulator YPI1">
    <location>
        <begin position="1"/>
        <end position="160"/>
    </location>
</feature>
<feature type="region of interest" description="Disordered" evidence="2">
    <location>
        <begin position="1"/>
        <end position="160"/>
    </location>
</feature>
<feature type="compositionally biased region" description="Polar residues" evidence="2">
    <location>
        <begin position="1"/>
        <end position="10"/>
    </location>
</feature>
<feature type="compositionally biased region" description="Basic and acidic residues" evidence="2">
    <location>
        <begin position="30"/>
        <end position="43"/>
    </location>
</feature>
<feature type="compositionally biased region" description="Basic residues" evidence="2">
    <location>
        <begin position="44"/>
        <end position="55"/>
    </location>
</feature>
<feature type="compositionally biased region" description="Basic and acidic residues" evidence="2">
    <location>
        <begin position="82"/>
        <end position="97"/>
    </location>
</feature>
<feature type="compositionally biased region" description="Basic and acidic residues" evidence="2">
    <location>
        <begin position="105"/>
        <end position="114"/>
    </location>
</feature>
<feature type="compositionally biased region" description="Basic and acidic residues" evidence="2">
    <location>
        <begin position="122"/>
        <end position="135"/>
    </location>
</feature>
<dbReference type="EMBL" id="AAVQ01000001">
    <property type="protein sequence ID" value="EAZ63594.2"/>
    <property type="molecule type" value="Genomic_DNA"/>
</dbReference>
<dbReference type="RefSeq" id="XP_001387617.2">
    <property type="nucleotide sequence ID" value="XM_001387580.1"/>
</dbReference>
<dbReference type="SMR" id="A3GGV1"/>
<dbReference type="STRING" id="322104.A3GGV1"/>
<dbReference type="GeneID" id="4851500"/>
<dbReference type="KEGG" id="pic:PICST_28748"/>
<dbReference type="eggNOG" id="KOG4102">
    <property type="taxonomic scope" value="Eukaryota"/>
</dbReference>
<dbReference type="HOGENOM" id="CLU_098333_3_0_1"/>
<dbReference type="InParanoid" id="A3GGV1"/>
<dbReference type="OMA" id="YQPHYEN"/>
<dbReference type="OrthoDB" id="307488at2759"/>
<dbReference type="Proteomes" id="UP000002258">
    <property type="component" value="Chromosome 1"/>
</dbReference>
<dbReference type="GO" id="GO:0005634">
    <property type="term" value="C:nucleus"/>
    <property type="evidence" value="ECO:0007669"/>
    <property type="project" value="UniProtKB-SubCell"/>
</dbReference>
<dbReference type="GO" id="GO:0008157">
    <property type="term" value="F:protein phosphatase 1 binding"/>
    <property type="evidence" value="ECO:0007669"/>
    <property type="project" value="TreeGrafter"/>
</dbReference>
<dbReference type="GO" id="GO:0004865">
    <property type="term" value="F:protein serine/threonine phosphatase inhibitor activity"/>
    <property type="evidence" value="ECO:0007669"/>
    <property type="project" value="InterPro"/>
</dbReference>
<dbReference type="InterPro" id="IPR011107">
    <property type="entry name" value="PPI_Ypi1"/>
</dbReference>
<dbReference type="PANTHER" id="PTHR20835:SF0">
    <property type="entry name" value="E3 UBIQUITIN-PROTEIN LIGASE PPP1R11"/>
    <property type="match status" value="1"/>
</dbReference>
<dbReference type="PANTHER" id="PTHR20835">
    <property type="entry name" value="E3 UBIQUITIN-PROTEIN LIGASE PPP1R11-RELATED"/>
    <property type="match status" value="1"/>
</dbReference>
<dbReference type="Pfam" id="PF07491">
    <property type="entry name" value="PPI_Ypi1"/>
    <property type="match status" value="1"/>
</dbReference>
<sequence length="160" mass="18065">MSNRTSNTTVEPRGSEVENRENVLLLRRQSVPEHESNPQERTKATQKKKKKKPKVRWTEDVVDNEDMNKKKTKICCIFHPQRNFDDGTDSDHSHSDSDSSSDSSGDERGGHEGSSRGPDGGNDSKKIVDGVKKEPIPNAYEYQPVYKNESKLPPGINDER</sequence>
<protein>
    <recommendedName>
        <fullName>Type 1 phosphatases regulator YPI1</fullName>
    </recommendedName>
</protein>
<organism>
    <name type="scientific">Scheffersomyces stipitis (strain ATCC 58785 / CBS 6054 / NBRC 10063 / NRRL Y-11545)</name>
    <name type="common">Yeast</name>
    <name type="synonym">Pichia stipitis</name>
    <dbReference type="NCBI Taxonomy" id="322104"/>
    <lineage>
        <taxon>Eukaryota</taxon>
        <taxon>Fungi</taxon>
        <taxon>Dikarya</taxon>
        <taxon>Ascomycota</taxon>
        <taxon>Saccharomycotina</taxon>
        <taxon>Pichiomycetes</taxon>
        <taxon>Debaryomycetaceae</taxon>
        <taxon>Scheffersomyces</taxon>
    </lineage>
</organism>
<name>YPI1_PICST</name>
<accession>A3GGV1</accession>
<gene>
    <name type="primary">YPI1</name>
    <name type="ORF">PICST_28748</name>
</gene>
<proteinExistence type="inferred from homology"/>
<comment type="function">
    <text evidence="1">Regulator of type 1 phosphatases which maintains protein phosphatase activity under strict control.</text>
</comment>
<comment type="subcellular location">
    <subcellularLocation>
        <location evidence="1">Nucleus</location>
    </subcellularLocation>
</comment>
<comment type="similarity">
    <text evidence="3">Belongs to the YPI1 family.</text>
</comment>
<keyword id="KW-0539">Nucleus</keyword>
<keyword id="KW-1185">Reference proteome</keyword>
<reference key="1">
    <citation type="journal article" date="2007" name="Nat. Biotechnol.">
        <title>Genome sequence of the lignocellulose-bioconverting and xylose-fermenting yeast Pichia stipitis.</title>
        <authorList>
            <person name="Jeffries T.W."/>
            <person name="Grigoriev I.V."/>
            <person name="Grimwood J."/>
            <person name="Laplaza J.M."/>
            <person name="Aerts A."/>
            <person name="Salamov A."/>
            <person name="Schmutz J."/>
            <person name="Lindquist E."/>
            <person name="Dehal P."/>
            <person name="Shapiro H."/>
            <person name="Jin Y.-S."/>
            <person name="Passoth V."/>
            <person name="Richardson P.M."/>
        </authorList>
    </citation>
    <scope>NUCLEOTIDE SEQUENCE [LARGE SCALE GENOMIC DNA]</scope>
    <source>
        <strain>ATCC 58785 / CBS 6054 / NBRC 10063 / NRRL Y-11545</strain>
    </source>
</reference>
<evidence type="ECO:0000250" key="1"/>
<evidence type="ECO:0000256" key="2">
    <source>
        <dbReference type="SAM" id="MobiDB-lite"/>
    </source>
</evidence>
<evidence type="ECO:0000305" key="3"/>